<feature type="chain" id="PRO_0000103071" description="SsrA-binding protein">
    <location>
        <begin position="1"/>
        <end position="167"/>
    </location>
</feature>
<feature type="region of interest" description="Disordered" evidence="2">
    <location>
        <begin position="139"/>
        <end position="167"/>
    </location>
</feature>
<feature type="compositionally biased region" description="Basic and acidic residues" evidence="2">
    <location>
        <begin position="139"/>
        <end position="158"/>
    </location>
</feature>
<evidence type="ECO:0000255" key="1">
    <source>
        <dbReference type="HAMAP-Rule" id="MF_00023"/>
    </source>
</evidence>
<evidence type="ECO:0000256" key="2">
    <source>
        <dbReference type="SAM" id="MobiDB-lite"/>
    </source>
</evidence>
<keyword id="KW-0963">Cytoplasm</keyword>
<keyword id="KW-0694">RNA-binding</keyword>
<accession>Q8PMB9</accession>
<sequence length="167" mass="19255">MSKKQTKDKANGAKATKTIALNKRARHEYHLEERYEAGLALQGWEVKAIRAGRANIVDGYAYVRSGEIYLIGAQITPLIQASTHTVPVERRDRKLLLHRAEIDKVLSRVEREGYTLVPTALYWSSNKVKLEIALAKGKQNHDKRDAAKDRDWQRDKQRVMRRHNRDA</sequence>
<proteinExistence type="inferred from homology"/>
<dbReference type="EMBL" id="AE008923">
    <property type="protein sequence ID" value="AAM36382.1"/>
    <property type="molecule type" value="Genomic_DNA"/>
</dbReference>
<dbReference type="RefSeq" id="WP_011050971.1">
    <property type="nucleotide sequence ID" value="NC_003919.1"/>
</dbReference>
<dbReference type="SMR" id="Q8PMB9"/>
<dbReference type="GeneID" id="66910672"/>
<dbReference type="KEGG" id="xac:XAC1513"/>
<dbReference type="eggNOG" id="COG0691">
    <property type="taxonomic scope" value="Bacteria"/>
</dbReference>
<dbReference type="HOGENOM" id="CLU_108953_3_0_6"/>
<dbReference type="Proteomes" id="UP000000576">
    <property type="component" value="Chromosome"/>
</dbReference>
<dbReference type="GO" id="GO:0005829">
    <property type="term" value="C:cytosol"/>
    <property type="evidence" value="ECO:0007669"/>
    <property type="project" value="TreeGrafter"/>
</dbReference>
<dbReference type="GO" id="GO:0003723">
    <property type="term" value="F:RNA binding"/>
    <property type="evidence" value="ECO:0007669"/>
    <property type="project" value="UniProtKB-UniRule"/>
</dbReference>
<dbReference type="GO" id="GO:0070929">
    <property type="term" value="P:trans-translation"/>
    <property type="evidence" value="ECO:0007669"/>
    <property type="project" value="UniProtKB-UniRule"/>
</dbReference>
<dbReference type="CDD" id="cd09294">
    <property type="entry name" value="SmpB"/>
    <property type="match status" value="1"/>
</dbReference>
<dbReference type="Gene3D" id="2.40.280.10">
    <property type="match status" value="1"/>
</dbReference>
<dbReference type="HAMAP" id="MF_00023">
    <property type="entry name" value="SmpB"/>
    <property type="match status" value="1"/>
</dbReference>
<dbReference type="InterPro" id="IPR023620">
    <property type="entry name" value="SmpB"/>
</dbReference>
<dbReference type="InterPro" id="IPR000037">
    <property type="entry name" value="SsrA-bd_prot"/>
</dbReference>
<dbReference type="InterPro" id="IPR020081">
    <property type="entry name" value="SsrA-bd_prot_CS"/>
</dbReference>
<dbReference type="NCBIfam" id="NF003843">
    <property type="entry name" value="PRK05422.1"/>
    <property type="match status" value="1"/>
</dbReference>
<dbReference type="NCBIfam" id="TIGR00086">
    <property type="entry name" value="smpB"/>
    <property type="match status" value="1"/>
</dbReference>
<dbReference type="PANTHER" id="PTHR30308:SF2">
    <property type="entry name" value="SSRA-BINDING PROTEIN"/>
    <property type="match status" value="1"/>
</dbReference>
<dbReference type="PANTHER" id="PTHR30308">
    <property type="entry name" value="TMRNA-BINDING COMPONENT OF TRANS-TRANSLATION TAGGING COMPLEX"/>
    <property type="match status" value="1"/>
</dbReference>
<dbReference type="Pfam" id="PF01668">
    <property type="entry name" value="SmpB"/>
    <property type="match status" value="1"/>
</dbReference>
<dbReference type="SUPFAM" id="SSF74982">
    <property type="entry name" value="Small protein B (SmpB)"/>
    <property type="match status" value="1"/>
</dbReference>
<dbReference type="PROSITE" id="PS01317">
    <property type="entry name" value="SSRP"/>
    <property type="match status" value="1"/>
</dbReference>
<comment type="function">
    <text evidence="1">Required for rescue of stalled ribosomes mediated by trans-translation. Binds to transfer-messenger RNA (tmRNA), required for stable association of tmRNA with ribosomes. tmRNA and SmpB together mimic tRNA shape, replacing the anticodon stem-loop with SmpB. tmRNA is encoded by the ssrA gene; the 2 termini fold to resemble tRNA(Ala) and it encodes a 'tag peptide', a short internal open reading frame. During trans-translation Ala-aminoacylated tmRNA acts like a tRNA, entering the A-site of stalled ribosomes, displacing the stalled mRNA. The ribosome then switches to translate the ORF on the tmRNA; the nascent peptide is terminated with the 'tag peptide' encoded by the tmRNA and targeted for degradation. The ribosome is freed to recommence translation, which seems to be the essential function of trans-translation.</text>
</comment>
<comment type="subcellular location">
    <subcellularLocation>
        <location evidence="1">Cytoplasm</location>
    </subcellularLocation>
    <text evidence="1">The tmRNA-SmpB complex associates with stalled 70S ribosomes.</text>
</comment>
<comment type="similarity">
    <text evidence="1">Belongs to the SmpB family.</text>
</comment>
<organism>
    <name type="scientific">Xanthomonas axonopodis pv. citri (strain 306)</name>
    <dbReference type="NCBI Taxonomy" id="190486"/>
    <lineage>
        <taxon>Bacteria</taxon>
        <taxon>Pseudomonadati</taxon>
        <taxon>Pseudomonadota</taxon>
        <taxon>Gammaproteobacteria</taxon>
        <taxon>Lysobacterales</taxon>
        <taxon>Lysobacteraceae</taxon>
        <taxon>Xanthomonas</taxon>
    </lineage>
</organism>
<reference key="1">
    <citation type="journal article" date="2002" name="Nature">
        <title>Comparison of the genomes of two Xanthomonas pathogens with differing host specificities.</title>
        <authorList>
            <person name="da Silva A.C.R."/>
            <person name="Ferro J.A."/>
            <person name="Reinach F.C."/>
            <person name="Farah C.S."/>
            <person name="Furlan L.R."/>
            <person name="Quaggio R.B."/>
            <person name="Monteiro-Vitorello C.B."/>
            <person name="Van Sluys M.A."/>
            <person name="Almeida N.F. Jr."/>
            <person name="Alves L.M.C."/>
            <person name="do Amaral A.M."/>
            <person name="Bertolini M.C."/>
            <person name="Camargo L.E.A."/>
            <person name="Camarotte G."/>
            <person name="Cannavan F."/>
            <person name="Cardozo J."/>
            <person name="Chambergo F."/>
            <person name="Ciapina L.P."/>
            <person name="Cicarelli R.M.B."/>
            <person name="Coutinho L.L."/>
            <person name="Cursino-Santos J.R."/>
            <person name="El-Dorry H."/>
            <person name="Faria J.B."/>
            <person name="Ferreira A.J.S."/>
            <person name="Ferreira R.C.C."/>
            <person name="Ferro M.I.T."/>
            <person name="Formighieri E.F."/>
            <person name="Franco M.C."/>
            <person name="Greggio C.C."/>
            <person name="Gruber A."/>
            <person name="Katsuyama A.M."/>
            <person name="Kishi L.T."/>
            <person name="Leite R.P."/>
            <person name="Lemos E.G.M."/>
            <person name="Lemos M.V.F."/>
            <person name="Locali E.C."/>
            <person name="Machado M.A."/>
            <person name="Madeira A.M.B.N."/>
            <person name="Martinez-Rossi N.M."/>
            <person name="Martins E.C."/>
            <person name="Meidanis J."/>
            <person name="Menck C.F.M."/>
            <person name="Miyaki C.Y."/>
            <person name="Moon D.H."/>
            <person name="Moreira L.M."/>
            <person name="Novo M.T.M."/>
            <person name="Okura V.K."/>
            <person name="Oliveira M.C."/>
            <person name="Oliveira V.R."/>
            <person name="Pereira H.A."/>
            <person name="Rossi A."/>
            <person name="Sena J.A.D."/>
            <person name="Silva C."/>
            <person name="de Souza R.F."/>
            <person name="Spinola L.A.F."/>
            <person name="Takita M.A."/>
            <person name="Tamura R.E."/>
            <person name="Teixeira E.C."/>
            <person name="Tezza R.I.D."/>
            <person name="Trindade dos Santos M."/>
            <person name="Truffi D."/>
            <person name="Tsai S.M."/>
            <person name="White F.F."/>
            <person name="Setubal J.C."/>
            <person name="Kitajima J.P."/>
        </authorList>
    </citation>
    <scope>NUCLEOTIDE SEQUENCE [LARGE SCALE GENOMIC DNA]</scope>
    <source>
        <strain>306</strain>
    </source>
</reference>
<gene>
    <name evidence="1" type="primary">smpB</name>
    <name type="ordered locus">XAC1513</name>
</gene>
<name>SSRP_XANAC</name>
<protein>
    <recommendedName>
        <fullName evidence="1">SsrA-binding protein</fullName>
    </recommendedName>
    <alternativeName>
        <fullName evidence="1">Small protein B</fullName>
    </alternativeName>
</protein>